<gene>
    <name type="primary">pob1</name>
    <name type="ORF">SPBC1289.04c</name>
</gene>
<accession>O74653</accession>
<proteinExistence type="evidence at protein level"/>
<dbReference type="EMBL" id="AB018044">
    <property type="protein sequence ID" value="BAA33490.1"/>
    <property type="molecule type" value="Genomic_DNA"/>
</dbReference>
<dbReference type="EMBL" id="CU329671">
    <property type="protein sequence ID" value="CAB38684.1"/>
    <property type="molecule type" value="Genomic_DNA"/>
</dbReference>
<dbReference type="PIR" id="T43427">
    <property type="entry name" value="T43427"/>
</dbReference>
<dbReference type="RefSeq" id="NP_596828.1">
    <property type="nucleotide sequence ID" value="NM_001023849.2"/>
</dbReference>
<dbReference type="SMR" id="O74653"/>
<dbReference type="BioGRID" id="276536">
    <property type="interactions" value="17"/>
</dbReference>
<dbReference type="FunCoup" id="O74653">
    <property type="interactions" value="58"/>
</dbReference>
<dbReference type="STRING" id="284812.O74653"/>
<dbReference type="iPTMnet" id="O74653"/>
<dbReference type="PaxDb" id="4896-SPBC1289.04c.1"/>
<dbReference type="EnsemblFungi" id="SPBC1289.04c.1">
    <property type="protein sequence ID" value="SPBC1289.04c.1:pep"/>
    <property type="gene ID" value="SPBC1289.04c"/>
</dbReference>
<dbReference type="GeneID" id="2539992"/>
<dbReference type="KEGG" id="spo:2539992"/>
<dbReference type="PomBase" id="SPBC1289.04c">
    <property type="gene designation" value="pob1"/>
</dbReference>
<dbReference type="VEuPathDB" id="FungiDB:SPBC1289.04c"/>
<dbReference type="eggNOG" id="ENOG502QPMX">
    <property type="taxonomic scope" value="Eukaryota"/>
</dbReference>
<dbReference type="HOGENOM" id="CLU_306775_0_0_1"/>
<dbReference type="InParanoid" id="O74653"/>
<dbReference type="OMA" id="FGDGWWE"/>
<dbReference type="PhylomeDB" id="O74653"/>
<dbReference type="PRO" id="PR:O74653"/>
<dbReference type="Proteomes" id="UP000002485">
    <property type="component" value="Chromosome II"/>
</dbReference>
<dbReference type="GO" id="GO:0051285">
    <property type="term" value="C:cell cortex of cell tip"/>
    <property type="evidence" value="ECO:0000314"/>
    <property type="project" value="PomBase"/>
</dbReference>
<dbReference type="GO" id="GO:0032153">
    <property type="term" value="C:cell division site"/>
    <property type="evidence" value="ECO:0000314"/>
    <property type="project" value="PomBase"/>
</dbReference>
<dbReference type="GO" id="GO:0051286">
    <property type="term" value="C:cell tip"/>
    <property type="evidence" value="ECO:0000314"/>
    <property type="project" value="PomBase"/>
</dbReference>
<dbReference type="GO" id="GO:0005829">
    <property type="term" value="C:cytosol"/>
    <property type="evidence" value="ECO:0007669"/>
    <property type="project" value="GOC"/>
</dbReference>
<dbReference type="GO" id="GO:0005769">
    <property type="term" value="C:early endosome"/>
    <property type="evidence" value="ECO:0000318"/>
    <property type="project" value="GO_Central"/>
</dbReference>
<dbReference type="GO" id="GO:0031097">
    <property type="term" value="C:medial cortex"/>
    <property type="evidence" value="ECO:0000314"/>
    <property type="project" value="PomBase"/>
</dbReference>
<dbReference type="GO" id="GO:0016020">
    <property type="term" value="C:membrane"/>
    <property type="evidence" value="ECO:0007669"/>
    <property type="project" value="UniProtKB-SubCell"/>
</dbReference>
<dbReference type="GO" id="GO:0055037">
    <property type="term" value="C:recycling endosome"/>
    <property type="evidence" value="ECO:0000318"/>
    <property type="project" value="GO_Central"/>
</dbReference>
<dbReference type="GO" id="GO:0005802">
    <property type="term" value="C:trans-Golgi network"/>
    <property type="evidence" value="ECO:0000318"/>
    <property type="project" value="GO_Central"/>
</dbReference>
<dbReference type="GO" id="GO:0008289">
    <property type="term" value="F:lipid binding"/>
    <property type="evidence" value="ECO:0000255"/>
    <property type="project" value="PomBase"/>
</dbReference>
<dbReference type="GO" id="GO:0007032">
    <property type="term" value="P:endosome organization"/>
    <property type="evidence" value="ECO:0000318"/>
    <property type="project" value="GO_Central"/>
</dbReference>
<dbReference type="GO" id="GO:0006887">
    <property type="term" value="P:exocytosis"/>
    <property type="evidence" value="ECO:0000316"/>
    <property type="project" value="PomBase"/>
</dbReference>
<dbReference type="GO" id="GO:0001881">
    <property type="term" value="P:receptor recycling"/>
    <property type="evidence" value="ECO:0000318"/>
    <property type="project" value="GO_Central"/>
</dbReference>
<dbReference type="GO" id="GO:0042147">
    <property type="term" value="P:retrograde transport, endosome to Golgi"/>
    <property type="evidence" value="ECO:0000318"/>
    <property type="project" value="GO_Central"/>
</dbReference>
<dbReference type="CDD" id="cd13316">
    <property type="entry name" value="PH_Boi"/>
    <property type="match status" value="1"/>
</dbReference>
<dbReference type="CDD" id="cd09535">
    <property type="entry name" value="SAM_BOI-like_fungal"/>
    <property type="match status" value="1"/>
</dbReference>
<dbReference type="CDD" id="cd00174">
    <property type="entry name" value="SH3"/>
    <property type="match status" value="1"/>
</dbReference>
<dbReference type="Gene3D" id="2.30.29.30">
    <property type="entry name" value="Pleckstrin-homology domain (PH domain)/Phosphotyrosine-binding domain (PTB)"/>
    <property type="match status" value="1"/>
</dbReference>
<dbReference type="Gene3D" id="2.30.30.40">
    <property type="entry name" value="SH3 Domains"/>
    <property type="match status" value="1"/>
</dbReference>
<dbReference type="Gene3D" id="1.10.150.50">
    <property type="entry name" value="Transcription Factor, Ets-1"/>
    <property type="match status" value="1"/>
</dbReference>
<dbReference type="InterPro" id="IPR045188">
    <property type="entry name" value="Boi1/Boi2-like"/>
</dbReference>
<dbReference type="InterPro" id="IPR011993">
    <property type="entry name" value="PH-like_dom_sf"/>
</dbReference>
<dbReference type="InterPro" id="IPR001849">
    <property type="entry name" value="PH_domain"/>
</dbReference>
<dbReference type="InterPro" id="IPR001660">
    <property type="entry name" value="SAM"/>
</dbReference>
<dbReference type="InterPro" id="IPR013761">
    <property type="entry name" value="SAM/pointed_sf"/>
</dbReference>
<dbReference type="InterPro" id="IPR036028">
    <property type="entry name" value="SH3-like_dom_sf"/>
</dbReference>
<dbReference type="InterPro" id="IPR001452">
    <property type="entry name" value="SH3_domain"/>
</dbReference>
<dbReference type="PANTHER" id="PTHR22902:SF27">
    <property type="entry name" value="PLECKSTRIN HOMOLOGY DOMAIN-CONTAINING FAMILY A MEMBER 3"/>
    <property type="match status" value="1"/>
</dbReference>
<dbReference type="PANTHER" id="PTHR22902">
    <property type="entry name" value="SESQUIPEDALIAN"/>
    <property type="match status" value="1"/>
</dbReference>
<dbReference type="Pfam" id="PF00169">
    <property type="entry name" value="PH"/>
    <property type="match status" value="1"/>
</dbReference>
<dbReference type="Pfam" id="PF07647">
    <property type="entry name" value="SAM_2"/>
    <property type="match status" value="1"/>
</dbReference>
<dbReference type="Pfam" id="PF00018">
    <property type="entry name" value="SH3_1"/>
    <property type="match status" value="1"/>
</dbReference>
<dbReference type="SMART" id="SM00233">
    <property type="entry name" value="PH"/>
    <property type="match status" value="1"/>
</dbReference>
<dbReference type="SMART" id="SM00454">
    <property type="entry name" value="SAM"/>
    <property type="match status" value="1"/>
</dbReference>
<dbReference type="SMART" id="SM00326">
    <property type="entry name" value="SH3"/>
    <property type="match status" value="1"/>
</dbReference>
<dbReference type="SUPFAM" id="SSF50729">
    <property type="entry name" value="PH domain-like"/>
    <property type="match status" value="1"/>
</dbReference>
<dbReference type="SUPFAM" id="SSF47769">
    <property type="entry name" value="SAM/Pointed domain"/>
    <property type="match status" value="1"/>
</dbReference>
<dbReference type="SUPFAM" id="SSF50044">
    <property type="entry name" value="SH3-domain"/>
    <property type="match status" value="1"/>
</dbReference>
<dbReference type="PROSITE" id="PS50003">
    <property type="entry name" value="PH_DOMAIN"/>
    <property type="match status" value="1"/>
</dbReference>
<dbReference type="PROSITE" id="PS50105">
    <property type="entry name" value="SAM_DOMAIN"/>
    <property type="match status" value="1"/>
</dbReference>
<dbReference type="PROSITE" id="PS50002">
    <property type="entry name" value="SH3"/>
    <property type="match status" value="1"/>
</dbReference>
<name>POB1_SCHPO</name>
<reference key="1">
    <citation type="journal article" date="1999" name="Mol. Biol. Cell">
        <title>Fission yeast Pob1p, which is homologous to budding yeast boi proteins and exhibits subcellular localization close to actin patches, is essential for cell elongation and separation.</title>
        <authorList>
            <person name="Toya M."/>
            <person name="Iino Y."/>
            <person name="Yamamoto M."/>
        </authorList>
    </citation>
    <scope>NUCLEOTIDE SEQUENCE [GENOMIC DNA]</scope>
    <scope>FUNCTION</scope>
    <scope>SUBCELLULAR LOCATION</scope>
</reference>
<reference key="2">
    <citation type="journal article" date="2002" name="Nature">
        <title>The genome sequence of Schizosaccharomyces pombe.</title>
        <authorList>
            <person name="Wood V."/>
            <person name="Gwilliam R."/>
            <person name="Rajandream M.A."/>
            <person name="Lyne M.H."/>
            <person name="Lyne R."/>
            <person name="Stewart A."/>
            <person name="Sgouros J.G."/>
            <person name="Peat N."/>
            <person name="Hayles J."/>
            <person name="Baker S.G."/>
            <person name="Basham D."/>
            <person name="Bowman S."/>
            <person name="Brooks K."/>
            <person name="Brown D."/>
            <person name="Brown S."/>
            <person name="Chillingworth T."/>
            <person name="Churcher C.M."/>
            <person name="Collins M."/>
            <person name="Connor R."/>
            <person name="Cronin A."/>
            <person name="Davis P."/>
            <person name="Feltwell T."/>
            <person name="Fraser A."/>
            <person name="Gentles S."/>
            <person name="Goble A."/>
            <person name="Hamlin N."/>
            <person name="Harris D.E."/>
            <person name="Hidalgo J."/>
            <person name="Hodgson G."/>
            <person name="Holroyd S."/>
            <person name="Hornsby T."/>
            <person name="Howarth S."/>
            <person name="Huckle E.J."/>
            <person name="Hunt S."/>
            <person name="Jagels K."/>
            <person name="James K.D."/>
            <person name="Jones L."/>
            <person name="Jones M."/>
            <person name="Leather S."/>
            <person name="McDonald S."/>
            <person name="McLean J."/>
            <person name="Mooney P."/>
            <person name="Moule S."/>
            <person name="Mungall K.L."/>
            <person name="Murphy L.D."/>
            <person name="Niblett D."/>
            <person name="Odell C."/>
            <person name="Oliver K."/>
            <person name="O'Neil S."/>
            <person name="Pearson D."/>
            <person name="Quail M.A."/>
            <person name="Rabbinowitsch E."/>
            <person name="Rutherford K.M."/>
            <person name="Rutter S."/>
            <person name="Saunders D."/>
            <person name="Seeger K."/>
            <person name="Sharp S."/>
            <person name="Skelton J."/>
            <person name="Simmonds M.N."/>
            <person name="Squares R."/>
            <person name="Squares S."/>
            <person name="Stevens K."/>
            <person name="Taylor K."/>
            <person name="Taylor R.G."/>
            <person name="Tivey A."/>
            <person name="Walsh S.V."/>
            <person name="Warren T."/>
            <person name="Whitehead S."/>
            <person name="Woodward J.R."/>
            <person name="Volckaert G."/>
            <person name="Aert R."/>
            <person name="Robben J."/>
            <person name="Grymonprez B."/>
            <person name="Weltjens I."/>
            <person name="Vanstreels E."/>
            <person name="Rieger M."/>
            <person name="Schaefer M."/>
            <person name="Mueller-Auer S."/>
            <person name="Gabel C."/>
            <person name="Fuchs M."/>
            <person name="Duesterhoeft A."/>
            <person name="Fritzc C."/>
            <person name="Holzer E."/>
            <person name="Moestl D."/>
            <person name="Hilbert H."/>
            <person name="Borzym K."/>
            <person name="Langer I."/>
            <person name="Beck A."/>
            <person name="Lehrach H."/>
            <person name="Reinhardt R."/>
            <person name="Pohl T.M."/>
            <person name="Eger P."/>
            <person name="Zimmermann W."/>
            <person name="Wedler H."/>
            <person name="Wambutt R."/>
            <person name="Purnelle B."/>
            <person name="Goffeau A."/>
            <person name="Cadieu E."/>
            <person name="Dreano S."/>
            <person name="Gloux S."/>
            <person name="Lelaure V."/>
            <person name="Mottier S."/>
            <person name="Galibert F."/>
            <person name="Aves S.J."/>
            <person name="Xiang Z."/>
            <person name="Hunt C."/>
            <person name="Moore K."/>
            <person name="Hurst S.M."/>
            <person name="Lucas M."/>
            <person name="Rochet M."/>
            <person name="Gaillardin C."/>
            <person name="Tallada V.A."/>
            <person name="Garzon A."/>
            <person name="Thode G."/>
            <person name="Daga R.R."/>
            <person name="Cruzado L."/>
            <person name="Jimenez J."/>
            <person name="Sanchez M."/>
            <person name="del Rey F."/>
            <person name="Benito J."/>
            <person name="Dominguez A."/>
            <person name="Revuelta J.L."/>
            <person name="Moreno S."/>
            <person name="Armstrong J."/>
            <person name="Forsburg S.L."/>
            <person name="Cerutti L."/>
            <person name="Lowe T."/>
            <person name="McCombie W.R."/>
            <person name="Paulsen I."/>
            <person name="Potashkin J."/>
            <person name="Shpakovski G.V."/>
            <person name="Ussery D."/>
            <person name="Barrell B.G."/>
            <person name="Nurse P."/>
        </authorList>
    </citation>
    <scope>NUCLEOTIDE SEQUENCE [LARGE SCALE GENOMIC DNA]</scope>
    <source>
        <strain>972 / ATCC 24843</strain>
    </source>
</reference>
<reference key="3">
    <citation type="journal article" date="2008" name="J. Proteome Res.">
        <title>Phosphoproteome analysis of fission yeast.</title>
        <authorList>
            <person name="Wilson-Grady J.T."/>
            <person name="Villen J."/>
            <person name="Gygi S.P."/>
        </authorList>
    </citation>
    <scope>PHOSPHORYLATION [LARGE SCALE ANALYSIS] AT SER-224; SER-225; TYR-229; SER-241; SER-433; SER-439; SER-440; THR-442; SER-444 AND SER-549</scope>
    <scope>IDENTIFICATION BY MASS SPECTROMETRY</scope>
</reference>
<comment type="function">
    <text evidence="5">Has a role in cell elongation and separation.</text>
</comment>
<comment type="subcellular location">
    <subcellularLocation>
        <location evidence="5">Cytoplasm</location>
    </subcellularLocation>
    <subcellularLocation>
        <location evidence="5">Membrane</location>
        <topology evidence="5">Peripheral membrane protein</topology>
    </subcellularLocation>
    <text>Membrane-associated at the cell tips during interphase.</text>
</comment>
<feature type="chain" id="PRO_0000058504" description="Protein pob1">
    <location>
        <begin position="1"/>
        <end position="871"/>
    </location>
</feature>
<feature type="domain" description="SH3" evidence="3">
    <location>
        <begin position="2"/>
        <end position="65"/>
    </location>
</feature>
<feature type="domain" description="SAM" evidence="2">
    <location>
        <begin position="250"/>
        <end position="313"/>
    </location>
</feature>
<feature type="domain" description="PH" evidence="1">
    <location>
        <begin position="698"/>
        <end position="808"/>
    </location>
</feature>
<feature type="region of interest" description="Disordered" evidence="4">
    <location>
        <begin position="42"/>
        <end position="168"/>
    </location>
</feature>
<feature type="region of interest" description="Disordered" evidence="4">
    <location>
        <begin position="329"/>
        <end position="371"/>
    </location>
</feature>
<feature type="region of interest" description="Disordered" evidence="4">
    <location>
        <begin position="384"/>
        <end position="670"/>
    </location>
</feature>
<feature type="compositionally biased region" description="Basic and acidic residues" evidence="4">
    <location>
        <begin position="62"/>
        <end position="80"/>
    </location>
</feature>
<feature type="compositionally biased region" description="Low complexity" evidence="4">
    <location>
        <begin position="88"/>
        <end position="100"/>
    </location>
</feature>
<feature type="compositionally biased region" description="Low complexity" evidence="4">
    <location>
        <begin position="109"/>
        <end position="124"/>
    </location>
</feature>
<feature type="compositionally biased region" description="Polar residues" evidence="4">
    <location>
        <begin position="131"/>
        <end position="168"/>
    </location>
</feature>
<feature type="compositionally biased region" description="Low complexity" evidence="4">
    <location>
        <begin position="329"/>
        <end position="343"/>
    </location>
</feature>
<feature type="compositionally biased region" description="Polar residues" evidence="4">
    <location>
        <begin position="384"/>
        <end position="395"/>
    </location>
</feature>
<feature type="compositionally biased region" description="Polar residues" evidence="4">
    <location>
        <begin position="404"/>
        <end position="451"/>
    </location>
</feature>
<feature type="compositionally biased region" description="Low complexity" evidence="4">
    <location>
        <begin position="456"/>
        <end position="467"/>
    </location>
</feature>
<feature type="compositionally biased region" description="Polar residues" evidence="4">
    <location>
        <begin position="492"/>
        <end position="511"/>
    </location>
</feature>
<feature type="compositionally biased region" description="Low complexity" evidence="4">
    <location>
        <begin position="549"/>
        <end position="560"/>
    </location>
</feature>
<feature type="compositionally biased region" description="Polar residues" evidence="4">
    <location>
        <begin position="561"/>
        <end position="574"/>
    </location>
</feature>
<feature type="compositionally biased region" description="Polar residues" evidence="4">
    <location>
        <begin position="583"/>
        <end position="606"/>
    </location>
</feature>
<feature type="modified residue" description="Phosphoserine" evidence="6">
    <location>
        <position position="224"/>
    </location>
</feature>
<feature type="modified residue" description="Phosphoserine" evidence="6">
    <location>
        <position position="225"/>
    </location>
</feature>
<feature type="modified residue" description="Phosphotyrosine" evidence="6">
    <location>
        <position position="229"/>
    </location>
</feature>
<feature type="modified residue" description="Phosphoserine" evidence="6">
    <location>
        <position position="241"/>
    </location>
</feature>
<feature type="modified residue" description="Phosphoserine" evidence="6">
    <location>
        <position position="433"/>
    </location>
</feature>
<feature type="modified residue" description="Phosphoserine" evidence="6">
    <location>
        <position position="439"/>
    </location>
</feature>
<feature type="modified residue" description="Phosphoserine" evidence="6">
    <location>
        <position position="440"/>
    </location>
</feature>
<feature type="modified residue" description="Phosphothreonine" evidence="6">
    <location>
        <position position="442"/>
    </location>
</feature>
<feature type="modified residue" description="Phosphoserine" evidence="6">
    <location>
        <position position="444"/>
    </location>
</feature>
<feature type="modified residue" description="Phosphoserine" evidence="6">
    <location>
        <position position="549"/>
    </location>
</feature>
<protein>
    <recommendedName>
        <fullName>Protein pob1</fullName>
    </recommendedName>
    <alternativeName>
        <fullName>BOI protein homolog</fullName>
    </alternativeName>
</protein>
<evidence type="ECO:0000255" key="1">
    <source>
        <dbReference type="PROSITE-ProRule" id="PRU00145"/>
    </source>
</evidence>
<evidence type="ECO:0000255" key="2">
    <source>
        <dbReference type="PROSITE-ProRule" id="PRU00184"/>
    </source>
</evidence>
<evidence type="ECO:0000255" key="3">
    <source>
        <dbReference type="PROSITE-ProRule" id="PRU00192"/>
    </source>
</evidence>
<evidence type="ECO:0000256" key="4">
    <source>
        <dbReference type="SAM" id="MobiDB-lite"/>
    </source>
</evidence>
<evidence type="ECO:0000269" key="5">
    <source>
    </source>
</evidence>
<evidence type="ECO:0000269" key="6">
    <source>
    </source>
</evidence>
<sequence>MASQRFVIALHSFPGKSSDELPLVEGRKYLLIKMDEEFGDGWWEGEDEQGNRGIFPASHVELISDERSDSSDSRRGKEDFSISTAEVTRSSLSSSRSTSSRSDKDSEKLYSNNSLSSSHSSILNGPLDSLSKPSVPSNFNSMFPSSKQEGPSPLLDNQPSSDLSNFNTIDADYNNASASTSAPATSASLKKVLSAEDSVRETITDIETALQNMSTSASRTPNDSSPLPYIENRPASSLAVSEKIQNVPNWSTEEVVEWLMNAGLGSVAPNFAENEITGEILLGLDSNVLKELNITSFGKRFEVLRKIQQLKDSYEQSLYEEYPQFAEPISVSQSSDSSSSIPKKSNDEAGGSPSKSSPTRPGFNDYVNRPTSVMPSLSNMIVSPDLDSSPSTDWNQYVIPPLATPSSRNSKSTQSAVPENVSRFDSNEPSATSPILKRSSPTDSISQNSGLPSRLTEPISSPSTSSIDVDKEGTSFPGLPYHSSKGNLYAPQPSSNVPTKFTGGASESSSVPPRPIPSAMKGKAPASAISIEALEELDPPKITTIDGESPSSISSRLPSSNLEQGSSSSVTKSPESMPDPSAKASSPVTSKGVSINEKSAVNNYATPLSKPQPKDTKGSKLGNTFVAPSPAASLPASPPVGTELKTRPTLRSVASSPLNKEPIGKRKSKRDIFGRQKVLPTGISEGLSNIPAKEAIKTADCHGWMRKRSDRYGVWKSRYFVLKGTRLSYYHSLNDASEKGLIDMTSHRVTKTDDIVLSGGKTAIKLIPPAPGAAKAAVMFTPPKVHYFTCENNEELHRWSSAFLKATVERDMSVPVLTTSRMPTISLSKAKELRTRPPSLLIDDENEANLTSSIGLKKNAKQKNKKSSKQK</sequence>
<organism>
    <name type="scientific">Schizosaccharomyces pombe (strain 972 / ATCC 24843)</name>
    <name type="common">Fission yeast</name>
    <dbReference type="NCBI Taxonomy" id="284812"/>
    <lineage>
        <taxon>Eukaryota</taxon>
        <taxon>Fungi</taxon>
        <taxon>Dikarya</taxon>
        <taxon>Ascomycota</taxon>
        <taxon>Taphrinomycotina</taxon>
        <taxon>Schizosaccharomycetes</taxon>
        <taxon>Schizosaccharomycetales</taxon>
        <taxon>Schizosaccharomycetaceae</taxon>
        <taxon>Schizosaccharomyces</taxon>
    </lineage>
</organism>
<keyword id="KW-0963">Cytoplasm</keyword>
<keyword id="KW-0472">Membrane</keyword>
<keyword id="KW-0597">Phosphoprotein</keyword>
<keyword id="KW-1185">Reference proteome</keyword>
<keyword id="KW-0728">SH3 domain</keyword>